<reference key="1">
    <citation type="journal article" date="2003" name="Nature">
        <title>The genome of a motile marine Synechococcus.</title>
        <authorList>
            <person name="Palenik B."/>
            <person name="Brahamsha B."/>
            <person name="Larimer F.W."/>
            <person name="Land M.L."/>
            <person name="Hauser L."/>
            <person name="Chain P."/>
            <person name="Lamerdin J.E."/>
            <person name="Regala W."/>
            <person name="Allen E.E."/>
            <person name="McCarren J."/>
            <person name="Paulsen I.T."/>
            <person name="Dufresne A."/>
            <person name="Partensky F."/>
            <person name="Webb E.A."/>
            <person name="Waterbury J."/>
        </authorList>
    </citation>
    <scope>NUCLEOTIDE SEQUENCE [LARGE SCALE GENOMIC DNA]</scope>
    <source>
        <strain>WH8102</strain>
    </source>
</reference>
<evidence type="ECO:0000255" key="1">
    <source>
        <dbReference type="HAMAP-Rule" id="MF_00610"/>
    </source>
</evidence>
<comment type="function">
    <text evidence="1">Component of the cytochrome b6-f complex, which mediates electron transfer between photosystem II (PSII) and photosystem I (PSI), cyclic electron flow around PSI, and state transitions.</text>
</comment>
<comment type="cofactor">
    <cofactor evidence="1">
        <name>heme</name>
        <dbReference type="ChEBI" id="CHEBI:30413"/>
    </cofactor>
    <text evidence="1">Binds 1 heme group covalently.</text>
</comment>
<comment type="subunit">
    <text evidence="1">The 4 large subunits of the cytochrome b6-f complex are cytochrome b6, subunit IV (17 kDa polypeptide, PetD), cytochrome f and the Rieske protein, while the 4 small subunits are PetG, PetL, PetM and PetN. The complex functions as a dimer.</text>
</comment>
<comment type="subcellular location">
    <subcellularLocation>
        <location evidence="1">Cellular thylakoid membrane</location>
        <topology evidence="1">Single-pass membrane protein</topology>
    </subcellularLocation>
</comment>
<comment type="similarity">
    <text evidence="1">Belongs to the cytochrome f family.</text>
</comment>
<gene>
    <name evidence="1" type="primary">petA</name>
    <name type="ordered locus">SYNW1842</name>
</gene>
<dbReference type="EMBL" id="BX569694">
    <property type="protein sequence ID" value="CAE08357.1"/>
    <property type="molecule type" value="Genomic_DNA"/>
</dbReference>
<dbReference type="RefSeq" id="WP_011128700.1">
    <property type="nucleotide sequence ID" value="NC_005070.1"/>
</dbReference>
<dbReference type="SMR" id="Q7U565"/>
<dbReference type="STRING" id="84588.SYNW1842"/>
<dbReference type="KEGG" id="syw:SYNW1842"/>
<dbReference type="eggNOG" id="COG0739">
    <property type="taxonomic scope" value="Bacteria"/>
</dbReference>
<dbReference type="HOGENOM" id="CLU_033498_0_0_3"/>
<dbReference type="BioCyc" id="MetaCyc:TX72_RS09275-MONOMER"/>
<dbReference type="Proteomes" id="UP000001422">
    <property type="component" value="Chromosome"/>
</dbReference>
<dbReference type="GO" id="GO:0031676">
    <property type="term" value="C:plasma membrane-derived thylakoid membrane"/>
    <property type="evidence" value="ECO:0007669"/>
    <property type="project" value="UniProtKB-SubCell"/>
</dbReference>
<dbReference type="GO" id="GO:0009055">
    <property type="term" value="F:electron transfer activity"/>
    <property type="evidence" value="ECO:0007669"/>
    <property type="project" value="UniProtKB-UniRule"/>
</dbReference>
<dbReference type="GO" id="GO:0020037">
    <property type="term" value="F:heme binding"/>
    <property type="evidence" value="ECO:0007669"/>
    <property type="project" value="InterPro"/>
</dbReference>
<dbReference type="GO" id="GO:0005506">
    <property type="term" value="F:iron ion binding"/>
    <property type="evidence" value="ECO:0007669"/>
    <property type="project" value="InterPro"/>
</dbReference>
<dbReference type="GO" id="GO:0015979">
    <property type="term" value="P:photosynthesis"/>
    <property type="evidence" value="ECO:0007669"/>
    <property type="project" value="UniProtKB-UniRule"/>
</dbReference>
<dbReference type="FunFam" id="2.60.40.830:FF:000001">
    <property type="entry name" value="Cytochrome f"/>
    <property type="match status" value="1"/>
</dbReference>
<dbReference type="Gene3D" id="2.40.50.100">
    <property type="match status" value="1"/>
</dbReference>
<dbReference type="Gene3D" id="2.60.40.830">
    <property type="entry name" value="Cytochrome f large domain"/>
    <property type="match status" value="1"/>
</dbReference>
<dbReference type="Gene3D" id="1.20.5.700">
    <property type="entry name" value="Single helix bin"/>
    <property type="match status" value="1"/>
</dbReference>
<dbReference type="HAMAP" id="MF_00610">
    <property type="entry name" value="Cytb6_f_cytF"/>
    <property type="match status" value="1"/>
</dbReference>
<dbReference type="InterPro" id="IPR024058">
    <property type="entry name" value="Cyt-f_TM"/>
</dbReference>
<dbReference type="InterPro" id="IPR002325">
    <property type="entry name" value="Cyt_f"/>
</dbReference>
<dbReference type="InterPro" id="IPR024094">
    <property type="entry name" value="Cyt_f_lg_dom"/>
</dbReference>
<dbReference type="InterPro" id="IPR036826">
    <property type="entry name" value="Cyt_f_lg_dom_sf"/>
</dbReference>
<dbReference type="InterPro" id="IPR011054">
    <property type="entry name" value="Rudment_hybrid_motif"/>
</dbReference>
<dbReference type="NCBIfam" id="NF002736">
    <property type="entry name" value="PRK02693.1"/>
    <property type="match status" value="1"/>
</dbReference>
<dbReference type="PANTHER" id="PTHR33288">
    <property type="match status" value="1"/>
</dbReference>
<dbReference type="PANTHER" id="PTHR33288:SF10">
    <property type="entry name" value="CYTOCHROME F"/>
    <property type="match status" value="1"/>
</dbReference>
<dbReference type="Pfam" id="PF01333">
    <property type="entry name" value="Apocytochr_F_C"/>
    <property type="match status" value="1"/>
</dbReference>
<dbReference type="Pfam" id="PF16639">
    <property type="entry name" value="Apocytochr_F_N"/>
    <property type="match status" value="1"/>
</dbReference>
<dbReference type="PRINTS" id="PR00610">
    <property type="entry name" value="CYTOCHROMEF"/>
</dbReference>
<dbReference type="SUPFAM" id="SSF103431">
    <property type="entry name" value="Cytochrome f subunit of the cytochrome b6f complex, transmembrane anchor"/>
    <property type="match status" value="1"/>
</dbReference>
<dbReference type="SUPFAM" id="SSF49441">
    <property type="entry name" value="Cytochrome f, large domain"/>
    <property type="match status" value="1"/>
</dbReference>
<dbReference type="SUPFAM" id="SSF51246">
    <property type="entry name" value="Rudiment single hybrid motif"/>
    <property type="match status" value="1"/>
</dbReference>
<dbReference type="PROSITE" id="PS51010">
    <property type="entry name" value="CYTF"/>
    <property type="match status" value="1"/>
</dbReference>
<organism>
    <name type="scientific">Parasynechococcus marenigrum (strain WH8102)</name>
    <dbReference type="NCBI Taxonomy" id="84588"/>
    <lineage>
        <taxon>Bacteria</taxon>
        <taxon>Bacillati</taxon>
        <taxon>Cyanobacteriota</taxon>
        <taxon>Cyanophyceae</taxon>
        <taxon>Synechococcales</taxon>
        <taxon>Prochlorococcaceae</taxon>
        <taxon>Parasynechococcus</taxon>
        <taxon>Parasynechococcus marenigrum</taxon>
    </lineage>
</organism>
<sequence length="311" mass="33052">MRRHLSLLIGSLVLGLSLLIAPAASWAYPFWAQQNYDSPREATGKIVCANCHLAKKLTQAEVPQSVLPDTVFTASVKIPYEEGLLEIGADGSDVGLQVGAVVMLPDGFTLAPQDRWTEEMKEETEGVYFSQYSDDQPNILLVGPIPGDQHQEVVFPLLSPDPATDSNIHFGKYQLHVGGNRGRGQVYPTGEKSNNAVYTAPASGSVAAIEDGDNGSSILTINTADGAAVTETIPVGPQLLVNVGDNVEAGAALTNDPNVGGFGQVDAEIVLQNPVRIYGLLAFFAAVALAQIMLVLKKRQIEKVQAAEGNF</sequence>
<keyword id="KW-0249">Electron transport</keyword>
<keyword id="KW-0349">Heme</keyword>
<keyword id="KW-0408">Iron</keyword>
<keyword id="KW-0472">Membrane</keyword>
<keyword id="KW-0479">Metal-binding</keyword>
<keyword id="KW-0602">Photosynthesis</keyword>
<keyword id="KW-0732">Signal</keyword>
<keyword id="KW-0793">Thylakoid</keyword>
<keyword id="KW-0812">Transmembrane</keyword>
<keyword id="KW-1133">Transmembrane helix</keyword>
<keyword id="KW-0813">Transport</keyword>
<name>CYF_PARMW</name>
<feature type="signal peptide" evidence="1">
    <location>
        <begin position="1"/>
        <end position="27"/>
    </location>
</feature>
<feature type="chain" id="PRO_5000096317" description="Cytochrome f">
    <location>
        <begin position="28"/>
        <end position="311"/>
    </location>
</feature>
<feature type="transmembrane region" description="Helical" evidence="1">
    <location>
        <begin position="277"/>
        <end position="297"/>
    </location>
</feature>
<feature type="binding site" description="axial binding residue" evidence="1">
    <location>
        <position position="28"/>
    </location>
    <ligand>
        <name>heme</name>
        <dbReference type="ChEBI" id="CHEBI:30413"/>
    </ligand>
    <ligandPart>
        <name>Fe</name>
        <dbReference type="ChEBI" id="CHEBI:18248"/>
    </ligandPart>
</feature>
<feature type="binding site" description="covalent" evidence="1">
    <location>
        <position position="48"/>
    </location>
    <ligand>
        <name>heme</name>
        <dbReference type="ChEBI" id="CHEBI:30413"/>
    </ligand>
</feature>
<feature type="binding site" description="covalent" evidence="1">
    <location>
        <position position="51"/>
    </location>
    <ligand>
        <name>heme</name>
        <dbReference type="ChEBI" id="CHEBI:30413"/>
    </ligand>
</feature>
<feature type="binding site" description="axial binding residue" evidence="1">
    <location>
        <position position="52"/>
    </location>
    <ligand>
        <name>heme</name>
        <dbReference type="ChEBI" id="CHEBI:30413"/>
    </ligand>
    <ligandPart>
        <name>Fe</name>
        <dbReference type="ChEBI" id="CHEBI:18248"/>
    </ligandPart>
</feature>
<protein>
    <recommendedName>
        <fullName evidence="1">Cytochrome f</fullName>
    </recommendedName>
</protein>
<accession>Q7U565</accession>
<proteinExistence type="inferred from homology"/>